<comment type="function">
    <text evidence="1">Catalyzes the attachment of proline to tRNA(Pro) in a two-step reaction: proline is first activated by ATP to form Pro-AMP and then transferred to the acceptor end of tRNA(Pro). As ProRS can inadvertently accommodate and process non-cognate amino acids such as alanine and cysteine, to avoid such errors it has two additional distinct editing activities against alanine. One activity is designated as 'pretransfer' editing and involves the tRNA(Pro)-independent hydrolysis of activated Ala-AMP. The other activity is designated 'posttransfer' editing and involves deacylation of mischarged Ala-tRNA(Pro). The misacylated Cys-tRNA(Pro) is not edited by ProRS.</text>
</comment>
<comment type="catalytic activity">
    <reaction evidence="1">
        <text>tRNA(Pro) + L-proline + ATP = L-prolyl-tRNA(Pro) + AMP + diphosphate</text>
        <dbReference type="Rhea" id="RHEA:14305"/>
        <dbReference type="Rhea" id="RHEA-COMP:9700"/>
        <dbReference type="Rhea" id="RHEA-COMP:9702"/>
        <dbReference type="ChEBI" id="CHEBI:30616"/>
        <dbReference type="ChEBI" id="CHEBI:33019"/>
        <dbReference type="ChEBI" id="CHEBI:60039"/>
        <dbReference type="ChEBI" id="CHEBI:78442"/>
        <dbReference type="ChEBI" id="CHEBI:78532"/>
        <dbReference type="ChEBI" id="CHEBI:456215"/>
        <dbReference type="EC" id="6.1.1.15"/>
    </reaction>
</comment>
<comment type="subunit">
    <text evidence="1">Homodimer.</text>
</comment>
<comment type="subcellular location">
    <subcellularLocation>
        <location evidence="1">Cytoplasm</location>
    </subcellularLocation>
</comment>
<comment type="domain">
    <text evidence="1">Consists of three domains: the N-terminal catalytic domain, the editing domain and the C-terminal anticodon-binding domain.</text>
</comment>
<comment type="similarity">
    <text evidence="1">Belongs to the class-II aminoacyl-tRNA synthetase family. ProS type 1 subfamily.</text>
</comment>
<dbReference type="EC" id="6.1.1.15" evidence="1"/>
<dbReference type="EMBL" id="CP001392">
    <property type="protein sequence ID" value="ACM32254.1"/>
    <property type="molecule type" value="Genomic_DNA"/>
</dbReference>
<dbReference type="RefSeq" id="WP_011804290.1">
    <property type="nucleotide sequence ID" value="NC_011992.1"/>
</dbReference>
<dbReference type="SMR" id="B9ME00"/>
<dbReference type="KEGG" id="dia:Dtpsy_0775"/>
<dbReference type="eggNOG" id="COG0442">
    <property type="taxonomic scope" value="Bacteria"/>
</dbReference>
<dbReference type="HOGENOM" id="CLU_016739_0_0_4"/>
<dbReference type="Proteomes" id="UP000000450">
    <property type="component" value="Chromosome"/>
</dbReference>
<dbReference type="GO" id="GO:0005829">
    <property type="term" value="C:cytosol"/>
    <property type="evidence" value="ECO:0007669"/>
    <property type="project" value="TreeGrafter"/>
</dbReference>
<dbReference type="GO" id="GO:0002161">
    <property type="term" value="F:aminoacyl-tRNA deacylase activity"/>
    <property type="evidence" value="ECO:0007669"/>
    <property type="project" value="InterPro"/>
</dbReference>
<dbReference type="GO" id="GO:0005524">
    <property type="term" value="F:ATP binding"/>
    <property type="evidence" value="ECO:0007669"/>
    <property type="project" value="UniProtKB-UniRule"/>
</dbReference>
<dbReference type="GO" id="GO:0004827">
    <property type="term" value="F:proline-tRNA ligase activity"/>
    <property type="evidence" value="ECO:0007669"/>
    <property type="project" value="UniProtKB-UniRule"/>
</dbReference>
<dbReference type="GO" id="GO:0006433">
    <property type="term" value="P:prolyl-tRNA aminoacylation"/>
    <property type="evidence" value="ECO:0007669"/>
    <property type="project" value="UniProtKB-UniRule"/>
</dbReference>
<dbReference type="CDD" id="cd04334">
    <property type="entry name" value="ProRS-INS"/>
    <property type="match status" value="1"/>
</dbReference>
<dbReference type="CDD" id="cd00861">
    <property type="entry name" value="ProRS_anticodon_short"/>
    <property type="match status" value="1"/>
</dbReference>
<dbReference type="CDD" id="cd00779">
    <property type="entry name" value="ProRS_core_prok"/>
    <property type="match status" value="1"/>
</dbReference>
<dbReference type="FunFam" id="3.30.930.10:FF:000042">
    <property type="entry name" value="probable proline--tRNA ligase, mitochondrial"/>
    <property type="match status" value="1"/>
</dbReference>
<dbReference type="Gene3D" id="3.40.50.800">
    <property type="entry name" value="Anticodon-binding domain"/>
    <property type="match status" value="1"/>
</dbReference>
<dbReference type="Gene3D" id="3.30.930.10">
    <property type="entry name" value="Bira Bifunctional Protein, Domain 2"/>
    <property type="match status" value="2"/>
</dbReference>
<dbReference type="Gene3D" id="3.90.960.10">
    <property type="entry name" value="YbaK/aminoacyl-tRNA synthetase-associated domain"/>
    <property type="match status" value="1"/>
</dbReference>
<dbReference type="HAMAP" id="MF_01569">
    <property type="entry name" value="Pro_tRNA_synth_type1"/>
    <property type="match status" value="1"/>
</dbReference>
<dbReference type="InterPro" id="IPR002314">
    <property type="entry name" value="aa-tRNA-synt_IIb"/>
</dbReference>
<dbReference type="InterPro" id="IPR006195">
    <property type="entry name" value="aa-tRNA-synth_II"/>
</dbReference>
<dbReference type="InterPro" id="IPR045864">
    <property type="entry name" value="aa-tRNA-synth_II/BPL/LPL"/>
</dbReference>
<dbReference type="InterPro" id="IPR004154">
    <property type="entry name" value="Anticodon-bd"/>
</dbReference>
<dbReference type="InterPro" id="IPR036621">
    <property type="entry name" value="Anticodon-bd_dom_sf"/>
</dbReference>
<dbReference type="InterPro" id="IPR002316">
    <property type="entry name" value="Pro-tRNA-ligase_IIa"/>
</dbReference>
<dbReference type="InterPro" id="IPR004500">
    <property type="entry name" value="Pro-tRNA-synth_IIa_bac-type"/>
</dbReference>
<dbReference type="InterPro" id="IPR023717">
    <property type="entry name" value="Pro-tRNA-Synthase_IIa_type1"/>
</dbReference>
<dbReference type="InterPro" id="IPR050062">
    <property type="entry name" value="Pro-tRNA_synthetase"/>
</dbReference>
<dbReference type="InterPro" id="IPR044140">
    <property type="entry name" value="ProRS_anticodon_short"/>
</dbReference>
<dbReference type="InterPro" id="IPR033730">
    <property type="entry name" value="ProRS_core_prok"/>
</dbReference>
<dbReference type="InterPro" id="IPR036754">
    <property type="entry name" value="YbaK/aa-tRNA-synt-asso_dom_sf"/>
</dbReference>
<dbReference type="InterPro" id="IPR007214">
    <property type="entry name" value="YbaK/aa-tRNA-synth-assoc-dom"/>
</dbReference>
<dbReference type="NCBIfam" id="NF006625">
    <property type="entry name" value="PRK09194.1"/>
    <property type="match status" value="1"/>
</dbReference>
<dbReference type="NCBIfam" id="TIGR00409">
    <property type="entry name" value="proS_fam_II"/>
    <property type="match status" value="1"/>
</dbReference>
<dbReference type="PANTHER" id="PTHR42753">
    <property type="entry name" value="MITOCHONDRIAL RIBOSOME PROTEIN L39/PROLYL-TRNA LIGASE FAMILY MEMBER"/>
    <property type="match status" value="1"/>
</dbReference>
<dbReference type="PANTHER" id="PTHR42753:SF2">
    <property type="entry name" value="PROLINE--TRNA LIGASE"/>
    <property type="match status" value="1"/>
</dbReference>
<dbReference type="Pfam" id="PF03129">
    <property type="entry name" value="HGTP_anticodon"/>
    <property type="match status" value="1"/>
</dbReference>
<dbReference type="Pfam" id="PF00587">
    <property type="entry name" value="tRNA-synt_2b"/>
    <property type="match status" value="1"/>
</dbReference>
<dbReference type="Pfam" id="PF04073">
    <property type="entry name" value="tRNA_edit"/>
    <property type="match status" value="1"/>
</dbReference>
<dbReference type="PIRSF" id="PIRSF001535">
    <property type="entry name" value="ProRS_1"/>
    <property type="match status" value="1"/>
</dbReference>
<dbReference type="PRINTS" id="PR01046">
    <property type="entry name" value="TRNASYNTHPRO"/>
</dbReference>
<dbReference type="SUPFAM" id="SSF52954">
    <property type="entry name" value="Class II aaRS ABD-related"/>
    <property type="match status" value="1"/>
</dbReference>
<dbReference type="SUPFAM" id="SSF55681">
    <property type="entry name" value="Class II aaRS and biotin synthetases"/>
    <property type="match status" value="1"/>
</dbReference>
<dbReference type="SUPFAM" id="SSF55826">
    <property type="entry name" value="YbaK/ProRS associated domain"/>
    <property type="match status" value="1"/>
</dbReference>
<dbReference type="PROSITE" id="PS50862">
    <property type="entry name" value="AA_TRNA_LIGASE_II"/>
    <property type="match status" value="1"/>
</dbReference>
<evidence type="ECO:0000255" key="1">
    <source>
        <dbReference type="HAMAP-Rule" id="MF_01569"/>
    </source>
</evidence>
<feature type="chain" id="PRO_1000185498" description="Proline--tRNA ligase">
    <location>
        <begin position="1"/>
        <end position="581"/>
    </location>
</feature>
<organism>
    <name type="scientific">Acidovorax ebreus (strain TPSY)</name>
    <name type="common">Diaphorobacter sp. (strain TPSY)</name>
    <dbReference type="NCBI Taxonomy" id="535289"/>
    <lineage>
        <taxon>Bacteria</taxon>
        <taxon>Pseudomonadati</taxon>
        <taxon>Pseudomonadota</taxon>
        <taxon>Betaproteobacteria</taxon>
        <taxon>Burkholderiales</taxon>
        <taxon>Comamonadaceae</taxon>
        <taxon>Diaphorobacter</taxon>
    </lineage>
</organism>
<sequence>MKASQFFISTLKEAPADAEVVSHQLMMRAGLIKKLGAGIYNYMPMGLRVIRKVEAIVREEMNRAGAVECTMPVVQPAELWQETGRFDKMGPELLRIHDRHGRDFVIQPTSEEVVTDIARQELRSYKQLPKNLYQIQTKFRDERRPRFGLMRGREFIMKDAYSFDRDQAGAKASYQVMAQAYRRIFDRFGLRYRAVAADSGAIGGDLSEEFQVIAATGEDAIVYCPASDYAANMEKAEALAPAGARPAAKQPLTVTPTPGKSTCADVAELLSVPLSTTVKSLVLATDETDAAGEIIRSQVWLLLLRGDHDMNEIKVAKVPGLDAGFRFATVAEIADHFGCKPGYLGPLNLQKPVKLVVDRDVAVMADWICGANQEGHHITGVNWGRDLPEPDMVADLRNVVAGDLSPDGQGELAIERGIEVGHVFYLGTKYSKAMNATFLGEDGKPAFFEMGCYGIGVTRLPAAAIEQNHDERGIIWPDAIAPFTVVICPVGMDRSEAVKAQAESLYADLLAAGVDVILDDRGERPGAMFADWELIGVPHRVTIGDKSLKEGQVEYQHRRDASATKVGVADILAHVKERLAA</sequence>
<gene>
    <name evidence="1" type="primary">proS</name>
    <name type="ordered locus">Dtpsy_0775</name>
</gene>
<accession>B9ME00</accession>
<keyword id="KW-0030">Aminoacyl-tRNA synthetase</keyword>
<keyword id="KW-0067">ATP-binding</keyword>
<keyword id="KW-0963">Cytoplasm</keyword>
<keyword id="KW-0436">Ligase</keyword>
<keyword id="KW-0547">Nucleotide-binding</keyword>
<keyword id="KW-0648">Protein biosynthesis</keyword>
<keyword id="KW-1185">Reference proteome</keyword>
<name>SYP_ACIET</name>
<reference key="1">
    <citation type="submission" date="2009-01" db="EMBL/GenBank/DDBJ databases">
        <title>Complete sequence of Diaphorobacter sp. TPSY.</title>
        <authorList>
            <consortium name="US DOE Joint Genome Institute"/>
            <person name="Lucas S."/>
            <person name="Copeland A."/>
            <person name="Lapidus A."/>
            <person name="Glavina del Rio T."/>
            <person name="Tice H."/>
            <person name="Bruce D."/>
            <person name="Goodwin L."/>
            <person name="Pitluck S."/>
            <person name="Chertkov O."/>
            <person name="Brettin T."/>
            <person name="Detter J.C."/>
            <person name="Han C."/>
            <person name="Larimer F."/>
            <person name="Land M."/>
            <person name="Hauser L."/>
            <person name="Kyrpides N."/>
            <person name="Mikhailova N."/>
            <person name="Coates J.D."/>
        </authorList>
    </citation>
    <scope>NUCLEOTIDE SEQUENCE [LARGE SCALE GENOMIC DNA]</scope>
    <source>
        <strain>TPSY</strain>
    </source>
</reference>
<proteinExistence type="inferred from homology"/>
<protein>
    <recommendedName>
        <fullName evidence="1">Proline--tRNA ligase</fullName>
        <ecNumber evidence="1">6.1.1.15</ecNumber>
    </recommendedName>
    <alternativeName>
        <fullName evidence="1">Prolyl-tRNA synthetase</fullName>
        <shortName evidence="1">ProRS</shortName>
    </alternativeName>
</protein>